<dbReference type="EMBL" id="EF067920">
    <property type="protein sequence ID" value="ABK20627.1"/>
    <property type="molecule type" value="Genomic_DNA"/>
</dbReference>
<dbReference type="RefSeq" id="YP_874404.1">
    <property type="nucleotide sequence ID" value="NC_008588.1"/>
</dbReference>
<dbReference type="SMR" id="A0T0C9"/>
<dbReference type="STRING" id="556484.A0T0C9"/>
<dbReference type="GeneID" id="4524601"/>
<dbReference type="InParanoid" id="A0T0C9"/>
<dbReference type="Proteomes" id="UP000000759">
    <property type="component" value="Chloroplast"/>
</dbReference>
<dbReference type="GO" id="GO:0009535">
    <property type="term" value="C:chloroplast thylakoid membrane"/>
    <property type="evidence" value="ECO:0007669"/>
    <property type="project" value="UniProtKB-SubCell"/>
</dbReference>
<dbReference type="GO" id="GO:0009055">
    <property type="term" value="F:electron transfer activity"/>
    <property type="evidence" value="ECO:0007669"/>
    <property type="project" value="UniProtKB-UniRule"/>
</dbReference>
<dbReference type="GO" id="GO:0020037">
    <property type="term" value="F:heme binding"/>
    <property type="evidence" value="ECO:0007669"/>
    <property type="project" value="InterPro"/>
</dbReference>
<dbReference type="GO" id="GO:0005506">
    <property type="term" value="F:iron ion binding"/>
    <property type="evidence" value="ECO:0007669"/>
    <property type="project" value="InterPro"/>
</dbReference>
<dbReference type="GO" id="GO:0015979">
    <property type="term" value="P:photosynthesis"/>
    <property type="evidence" value="ECO:0007669"/>
    <property type="project" value="UniProtKB-UniRule"/>
</dbReference>
<dbReference type="FunFam" id="1.20.5.700:FF:000001">
    <property type="entry name" value="Cytochrome f"/>
    <property type="match status" value="1"/>
</dbReference>
<dbReference type="Gene3D" id="2.40.50.100">
    <property type="match status" value="1"/>
</dbReference>
<dbReference type="Gene3D" id="2.60.40.830">
    <property type="entry name" value="Cytochrome f large domain"/>
    <property type="match status" value="1"/>
</dbReference>
<dbReference type="Gene3D" id="1.20.5.700">
    <property type="entry name" value="Single helix bin"/>
    <property type="match status" value="1"/>
</dbReference>
<dbReference type="HAMAP" id="MF_00610">
    <property type="entry name" value="Cytb6_f_cytF"/>
    <property type="match status" value="1"/>
</dbReference>
<dbReference type="InterPro" id="IPR024058">
    <property type="entry name" value="Cyt-f_TM"/>
</dbReference>
<dbReference type="InterPro" id="IPR002325">
    <property type="entry name" value="Cyt_f"/>
</dbReference>
<dbReference type="InterPro" id="IPR024094">
    <property type="entry name" value="Cyt_f_lg_dom"/>
</dbReference>
<dbReference type="InterPro" id="IPR036826">
    <property type="entry name" value="Cyt_f_lg_dom_sf"/>
</dbReference>
<dbReference type="InterPro" id="IPR011054">
    <property type="entry name" value="Rudment_hybrid_motif"/>
</dbReference>
<dbReference type="PANTHER" id="PTHR33288">
    <property type="match status" value="1"/>
</dbReference>
<dbReference type="PANTHER" id="PTHR33288:SF10">
    <property type="entry name" value="CYTOCHROME F"/>
    <property type="match status" value="1"/>
</dbReference>
<dbReference type="Pfam" id="PF01333">
    <property type="entry name" value="Apocytochr_F_C"/>
    <property type="match status" value="1"/>
</dbReference>
<dbReference type="Pfam" id="PF16639">
    <property type="entry name" value="Apocytochr_F_N"/>
    <property type="match status" value="1"/>
</dbReference>
<dbReference type="PRINTS" id="PR00610">
    <property type="entry name" value="CYTOCHROMEF"/>
</dbReference>
<dbReference type="SUPFAM" id="SSF103431">
    <property type="entry name" value="Cytochrome f subunit of the cytochrome b6f complex, transmembrane anchor"/>
    <property type="match status" value="1"/>
</dbReference>
<dbReference type="SUPFAM" id="SSF49441">
    <property type="entry name" value="Cytochrome f, large domain"/>
    <property type="match status" value="1"/>
</dbReference>
<dbReference type="SUPFAM" id="SSF51246">
    <property type="entry name" value="Rudiment single hybrid motif"/>
    <property type="match status" value="1"/>
</dbReference>
<dbReference type="PROSITE" id="PS51010">
    <property type="entry name" value="CYTF"/>
    <property type="match status" value="1"/>
</dbReference>
<protein>
    <recommendedName>
        <fullName evidence="2">Cytochrome f</fullName>
    </recommendedName>
</protein>
<evidence type="ECO:0000250" key="1"/>
<evidence type="ECO:0000255" key="2">
    <source>
        <dbReference type="HAMAP-Rule" id="MF_00610"/>
    </source>
</evidence>
<name>CYF_PHATC</name>
<proteinExistence type="inferred from homology"/>
<sequence>MATNKFFKSLLFALTIAINSFGFCIQDAVAYPVFAQQNYSNPRAANGKLACANCHLNQKAIEIEAPQAVLPNSIFEVEIKVPYDTTKQQLGANGKKADLNVGGILMLPEGFKLAPKNQIPAEVKEKNKGVFISPYSSEFDNILVVGPIAGKTHQELIFPVMAPDPEKNSDIKYLTYPFYAGGNRGRGQVYPTGEKSNVNVFGANQSGQITEITVTEKGESTILILNSNGKQTSQVLPAGLILSIKQGQVVKADQPLNIDPNVGGFGQEESEIVLQNPIRIYGYLAFCFSVLITQIMLVLKKKQFEKVQAAELNF</sequence>
<gene>
    <name evidence="2" type="primary">petA</name>
</gene>
<organism>
    <name type="scientific">Phaeodactylum tricornutum (strain CCAP 1055/1)</name>
    <dbReference type="NCBI Taxonomy" id="556484"/>
    <lineage>
        <taxon>Eukaryota</taxon>
        <taxon>Sar</taxon>
        <taxon>Stramenopiles</taxon>
        <taxon>Ochrophyta</taxon>
        <taxon>Bacillariophyta</taxon>
        <taxon>Bacillariophyceae</taxon>
        <taxon>Bacillariophycidae</taxon>
        <taxon>Naviculales</taxon>
        <taxon>Phaeodactylaceae</taxon>
        <taxon>Phaeodactylum</taxon>
    </lineage>
</organism>
<comment type="function">
    <text evidence="2">Component of the cytochrome b6-f complex, which mediates electron transfer between photosystem II (PSII) and photosystem I (PSI), cyclic electron flow around PSI, and state transitions.</text>
</comment>
<comment type="cofactor">
    <cofactor evidence="2">
        <name>heme</name>
        <dbReference type="ChEBI" id="CHEBI:30413"/>
    </cofactor>
    <text evidence="2">Binds 1 heme group covalently.</text>
</comment>
<comment type="subunit">
    <text evidence="1">The 4 large subunits of the cytochrome b6-f complex are cytochrome b6, subunit IV (17 kDa polypeptide, petD), cytochrome f and the Rieske protein, while the 4 small subunits are PetG, PetL, PetM and PetN. The complex functions as a dimer (By similarity).</text>
</comment>
<comment type="subcellular location">
    <subcellularLocation>
        <location evidence="2">Plastid</location>
        <location evidence="2">Chloroplast thylakoid membrane</location>
        <topology evidence="2">Single-pass membrane protein</topology>
    </subcellularLocation>
</comment>
<comment type="similarity">
    <text evidence="2">Belongs to the cytochrome f family.</text>
</comment>
<geneLocation type="chloroplast"/>
<accession>A0T0C9</accession>
<feature type="signal peptide" evidence="2">
    <location>
        <begin position="1"/>
        <end position="30"/>
    </location>
</feature>
<feature type="chain" id="PRO_0000342085" description="Cytochrome f">
    <location>
        <begin position="31"/>
        <end position="314"/>
    </location>
</feature>
<feature type="transmembrane region" description="Helical" evidence="2">
    <location>
        <begin position="280"/>
        <end position="300"/>
    </location>
</feature>
<feature type="binding site" description="axial binding residue" evidence="2">
    <location>
        <position position="31"/>
    </location>
    <ligand>
        <name>heme</name>
        <dbReference type="ChEBI" id="CHEBI:30413"/>
    </ligand>
    <ligandPart>
        <name>Fe</name>
        <dbReference type="ChEBI" id="CHEBI:18248"/>
    </ligandPart>
</feature>
<feature type="binding site" description="covalent" evidence="2">
    <location>
        <position position="51"/>
    </location>
    <ligand>
        <name>heme</name>
        <dbReference type="ChEBI" id="CHEBI:30413"/>
    </ligand>
</feature>
<feature type="binding site" description="covalent" evidence="2">
    <location>
        <position position="54"/>
    </location>
    <ligand>
        <name>heme</name>
        <dbReference type="ChEBI" id="CHEBI:30413"/>
    </ligand>
</feature>
<feature type="binding site" description="axial binding residue" evidence="2">
    <location>
        <position position="55"/>
    </location>
    <ligand>
        <name>heme</name>
        <dbReference type="ChEBI" id="CHEBI:30413"/>
    </ligand>
    <ligandPart>
        <name>Fe</name>
        <dbReference type="ChEBI" id="CHEBI:18248"/>
    </ligandPart>
</feature>
<keyword id="KW-0150">Chloroplast</keyword>
<keyword id="KW-0249">Electron transport</keyword>
<keyword id="KW-0349">Heme</keyword>
<keyword id="KW-0408">Iron</keyword>
<keyword id="KW-0472">Membrane</keyword>
<keyword id="KW-0479">Metal-binding</keyword>
<keyword id="KW-0602">Photosynthesis</keyword>
<keyword id="KW-0934">Plastid</keyword>
<keyword id="KW-1185">Reference proteome</keyword>
<keyword id="KW-0732">Signal</keyword>
<keyword id="KW-0793">Thylakoid</keyword>
<keyword id="KW-0812">Transmembrane</keyword>
<keyword id="KW-1133">Transmembrane helix</keyword>
<keyword id="KW-0813">Transport</keyword>
<reference key="1">
    <citation type="journal article" date="2007" name="Mol. Genet. Genomics">
        <title>Chloroplast genomes of the diatoms Phaeodactylum tricornutum and Thalassiosira pseudonana: comparison with other plastid genomes of the red lineage.</title>
        <authorList>
            <person name="Oudot-Le Secq M.-P."/>
            <person name="Grimwood J."/>
            <person name="Shapiro H."/>
            <person name="Armbrust E.V."/>
            <person name="Bowler C."/>
            <person name="Green B.R."/>
        </authorList>
    </citation>
    <scope>NUCLEOTIDE SEQUENCE [LARGE SCALE GENOMIC DNA]</scope>
    <source>
        <strain>CCAP 1055/1</strain>
    </source>
</reference>